<name>NHR90_CAEEL</name>
<sequence length="393" mass="45725">MLVKSLQTCKICGAENTRGNHFGVQCCRACAVFFRRRAGTKYLRLKCLSVHCGEAARFCKPCRLKRCYEAGMKIEYFQHNRDSIKSSSIAQIPRSFANIVGRPSLVIFCVPQDSYQKTFVDLNSLVGKASEIFTAGPESPYIGLTQLKKLATFSNCSKEWAQTRFKTISHGEMSYFWEFYFLRTAKWLTYFDEFQRIPDEIKIKLLLSFWHVFARLDKLITTAKARKLKLCSQQTWAMSNGLILDFDRTKVDFSDISNYPTEDLFYFLNSITALDLQPQVLELMELEVSDMEFNFMLAQLTFSYAGKRFQGDILKICDRFQEVLSNDLHEYYVKEMRTPRYSGRLGKIMKINNAIQNDIWKNRPRGELAAIFNVFKVEFSHPEMFIDTGFVRN</sequence>
<feature type="chain" id="PRO_0000223583" description="Nuclear hormone receptor family member nhr-90">
    <location>
        <begin position="1"/>
        <end position="393"/>
    </location>
</feature>
<feature type="domain" description="NR LBD" evidence="2">
    <location>
        <begin position="121"/>
        <end position="388"/>
    </location>
</feature>
<feature type="DNA-binding region" description="Nuclear receptor" evidence="1">
    <location>
        <begin position="6"/>
        <end position="79"/>
    </location>
</feature>
<feature type="zinc finger region" description="NR C4-type" evidence="1">
    <location>
        <begin position="9"/>
        <end position="30"/>
    </location>
</feature>
<feature type="zinc finger region" description="NR C4-type; degenerate" evidence="1">
    <location>
        <begin position="47"/>
        <end position="62"/>
    </location>
</feature>
<comment type="function">
    <text>Orphan nuclear receptor.</text>
</comment>
<comment type="subcellular location">
    <subcellularLocation>
        <location evidence="1">Nucleus</location>
    </subcellularLocation>
</comment>
<comment type="similarity">
    <text evidence="3">Belongs to the nuclear hormone receptor family.</text>
</comment>
<reference key="1">
    <citation type="journal article" date="1998" name="Science">
        <title>Genome sequence of the nematode C. elegans: a platform for investigating biology.</title>
        <authorList>
            <consortium name="The C. elegans sequencing consortium"/>
        </authorList>
    </citation>
    <scope>NUCLEOTIDE SEQUENCE [LARGE SCALE GENOMIC DNA]</scope>
    <source>
        <strain>Bristol N2</strain>
    </source>
</reference>
<keyword id="KW-0238">DNA-binding</keyword>
<keyword id="KW-0479">Metal-binding</keyword>
<keyword id="KW-0539">Nucleus</keyword>
<keyword id="KW-0675">Receptor</keyword>
<keyword id="KW-1185">Reference proteome</keyword>
<keyword id="KW-0804">Transcription</keyword>
<keyword id="KW-0805">Transcription regulation</keyword>
<keyword id="KW-0862">Zinc</keyword>
<keyword id="KW-0863">Zinc-finger</keyword>
<organism>
    <name type="scientific">Caenorhabditis elegans</name>
    <dbReference type="NCBI Taxonomy" id="6239"/>
    <lineage>
        <taxon>Eukaryota</taxon>
        <taxon>Metazoa</taxon>
        <taxon>Ecdysozoa</taxon>
        <taxon>Nematoda</taxon>
        <taxon>Chromadorea</taxon>
        <taxon>Rhabditida</taxon>
        <taxon>Rhabditina</taxon>
        <taxon>Rhabditomorpha</taxon>
        <taxon>Rhabditoidea</taxon>
        <taxon>Rhabditidae</taxon>
        <taxon>Peloderinae</taxon>
        <taxon>Caenorhabditis</taxon>
    </lineage>
</organism>
<gene>
    <name type="primary">nhr-90</name>
    <name type="ORF">ZK488.2</name>
</gene>
<proteinExistence type="inferred from homology"/>
<accession>O17025</accession>
<evidence type="ECO:0000255" key="1">
    <source>
        <dbReference type="PROSITE-ProRule" id="PRU00407"/>
    </source>
</evidence>
<evidence type="ECO:0000255" key="2">
    <source>
        <dbReference type="PROSITE-ProRule" id="PRU01189"/>
    </source>
</evidence>
<evidence type="ECO:0000305" key="3"/>
<dbReference type="EMBL" id="FO081423">
    <property type="protein sequence ID" value="CCD71522.1"/>
    <property type="molecule type" value="Genomic_DNA"/>
</dbReference>
<dbReference type="PIR" id="T32237">
    <property type="entry name" value="T32237"/>
</dbReference>
<dbReference type="RefSeq" id="NP_503263.1">
    <property type="nucleotide sequence ID" value="NM_070862.6"/>
</dbReference>
<dbReference type="FunCoup" id="O17025">
    <property type="interactions" value="1172"/>
</dbReference>
<dbReference type="PaxDb" id="6239-ZK488.2"/>
<dbReference type="EnsemblMetazoa" id="ZK488.2.1">
    <property type="protein sequence ID" value="ZK488.2.1"/>
    <property type="gene ID" value="WBGene00003680"/>
</dbReference>
<dbReference type="GeneID" id="178577"/>
<dbReference type="KEGG" id="cel:CELE_ZK488.2"/>
<dbReference type="UCSC" id="ZK488.2">
    <property type="organism name" value="c. elegans"/>
</dbReference>
<dbReference type="AGR" id="WB:WBGene00003680"/>
<dbReference type="CTD" id="178577"/>
<dbReference type="WormBase" id="ZK488.2">
    <property type="protein sequence ID" value="CE28191"/>
    <property type="gene ID" value="WBGene00003680"/>
    <property type="gene designation" value="nhr-90"/>
</dbReference>
<dbReference type="eggNOG" id="KOG3575">
    <property type="taxonomic scope" value="Eukaryota"/>
</dbReference>
<dbReference type="GeneTree" id="ENSGT00970000196030"/>
<dbReference type="HOGENOM" id="CLU_007368_7_1_1"/>
<dbReference type="InParanoid" id="O17025"/>
<dbReference type="OMA" id="CDRFQEV"/>
<dbReference type="OrthoDB" id="5816380at2759"/>
<dbReference type="PhylomeDB" id="O17025"/>
<dbReference type="PRO" id="PR:O17025"/>
<dbReference type="Proteomes" id="UP000001940">
    <property type="component" value="Chromosome V"/>
</dbReference>
<dbReference type="Bgee" id="WBGene00003680">
    <property type="expression patterns" value="Expressed in larva and 3 other cell types or tissues"/>
</dbReference>
<dbReference type="GO" id="GO:0005634">
    <property type="term" value="C:nucleus"/>
    <property type="evidence" value="ECO:0007669"/>
    <property type="project" value="UniProtKB-SubCell"/>
</dbReference>
<dbReference type="GO" id="GO:0003700">
    <property type="term" value="F:DNA-binding transcription factor activity"/>
    <property type="evidence" value="ECO:0007669"/>
    <property type="project" value="InterPro"/>
</dbReference>
<dbReference type="GO" id="GO:0043565">
    <property type="term" value="F:sequence-specific DNA binding"/>
    <property type="evidence" value="ECO:0007669"/>
    <property type="project" value="InterPro"/>
</dbReference>
<dbReference type="GO" id="GO:0008270">
    <property type="term" value="F:zinc ion binding"/>
    <property type="evidence" value="ECO:0007669"/>
    <property type="project" value="UniProtKB-KW"/>
</dbReference>
<dbReference type="Gene3D" id="3.30.50.10">
    <property type="entry name" value="Erythroid Transcription Factor GATA-1, subunit A"/>
    <property type="match status" value="1"/>
</dbReference>
<dbReference type="Gene3D" id="1.10.565.10">
    <property type="entry name" value="Retinoid X Receptor"/>
    <property type="match status" value="1"/>
</dbReference>
<dbReference type="InterPro" id="IPR051152">
    <property type="entry name" value="C.elegans_Orphan_NR"/>
</dbReference>
<dbReference type="InterPro" id="IPR035500">
    <property type="entry name" value="NHR-like_dom_sf"/>
</dbReference>
<dbReference type="InterPro" id="IPR000536">
    <property type="entry name" value="Nucl_hrmn_rcpt_lig-bd"/>
</dbReference>
<dbReference type="InterPro" id="IPR001628">
    <property type="entry name" value="Znf_hrmn_rcpt"/>
</dbReference>
<dbReference type="InterPro" id="IPR013088">
    <property type="entry name" value="Znf_NHR/GATA"/>
</dbReference>
<dbReference type="PANTHER" id="PTHR45680">
    <property type="entry name" value="NUCLEAR HORMONE RECEPTOR FAMILY"/>
    <property type="match status" value="1"/>
</dbReference>
<dbReference type="PANTHER" id="PTHR45680:SF35">
    <property type="entry name" value="NUCLEAR HORMONE RECEPTOR FAMILY-RELATED"/>
    <property type="match status" value="1"/>
</dbReference>
<dbReference type="Pfam" id="PF00104">
    <property type="entry name" value="Hormone_recep"/>
    <property type="match status" value="1"/>
</dbReference>
<dbReference type="Pfam" id="PF00105">
    <property type="entry name" value="zf-C4"/>
    <property type="match status" value="1"/>
</dbReference>
<dbReference type="SMART" id="SM00430">
    <property type="entry name" value="HOLI"/>
    <property type="match status" value="1"/>
</dbReference>
<dbReference type="SMART" id="SM00399">
    <property type="entry name" value="ZnF_C4"/>
    <property type="match status" value="1"/>
</dbReference>
<dbReference type="SUPFAM" id="SSF57716">
    <property type="entry name" value="Glucocorticoid receptor-like (DNA-binding domain)"/>
    <property type="match status" value="1"/>
</dbReference>
<dbReference type="SUPFAM" id="SSF48508">
    <property type="entry name" value="Nuclear receptor ligand-binding domain"/>
    <property type="match status" value="1"/>
</dbReference>
<dbReference type="PROSITE" id="PS51843">
    <property type="entry name" value="NR_LBD"/>
    <property type="match status" value="1"/>
</dbReference>
<dbReference type="PROSITE" id="PS00031">
    <property type="entry name" value="NUCLEAR_REC_DBD_1"/>
    <property type="match status" value="1"/>
</dbReference>
<dbReference type="PROSITE" id="PS51030">
    <property type="entry name" value="NUCLEAR_REC_DBD_2"/>
    <property type="match status" value="1"/>
</dbReference>
<protein>
    <recommendedName>
        <fullName>Nuclear hormone receptor family member nhr-90</fullName>
    </recommendedName>
</protein>